<keyword id="KW-1185">Reference proteome</keyword>
<keyword id="KW-0687">Ribonucleoprotein</keyword>
<keyword id="KW-0689">Ribosomal protein</keyword>
<comment type="similarity">
    <text evidence="1">Belongs to the bacterial ribosomal protein bL27 family.</text>
</comment>
<feature type="chain" id="PRO_1000017537" description="Large ribosomal subunit protein bL27">
    <location>
        <begin position="1"/>
        <end position="89"/>
    </location>
</feature>
<feature type="region of interest" description="Disordered" evidence="2">
    <location>
        <begin position="1"/>
        <end position="21"/>
    </location>
</feature>
<reference key="1">
    <citation type="journal article" date="2011" name="J. Bacteriol.">
        <title>Genome of Ochrobactrum anthropi ATCC 49188 T, a versatile opportunistic pathogen and symbiont of several eukaryotic hosts.</title>
        <authorList>
            <person name="Chain P.S."/>
            <person name="Lang D.M."/>
            <person name="Comerci D.J."/>
            <person name="Malfatti S.A."/>
            <person name="Vergez L.M."/>
            <person name="Shin M."/>
            <person name="Ugalde R.A."/>
            <person name="Garcia E."/>
            <person name="Tolmasky M.E."/>
        </authorList>
    </citation>
    <scope>NUCLEOTIDE SEQUENCE [LARGE SCALE GENOMIC DNA]</scope>
    <source>
        <strain>ATCC 49188 / DSM 6882 / CCUG 24695 / JCM 21032 / LMG 3331 / NBRC 15819 / NCTC 12168 / Alc 37</strain>
    </source>
</reference>
<evidence type="ECO:0000255" key="1">
    <source>
        <dbReference type="HAMAP-Rule" id="MF_00539"/>
    </source>
</evidence>
<evidence type="ECO:0000256" key="2">
    <source>
        <dbReference type="SAM" id="MobiDB-lite"/>
    </source>
</evidence>
<evidence type="ECO:0000305" key="3"/>
<dbReference type="EMBL" id="CP000758">
    <property type="protein sequence ID" value="ABS13771.1"/>
    <property type="molecule type" value="Genomic_DNA"/>
</dbReference>
<dbReference type="RefSeq" id="WP_010661520.1">
    <property type="nucleotide sequence ID" value="NC_009667.1"/>
</dbReference>
<dbReference type="SMR" id="A6WXR7"/>
<dbReference type="STRING" id="439375.Oant_1051"/>
<dbReference type="GeneID" id="61318453"/>
<dbReference type="KEGG" id="oan:Oant_1051"/>
<dbReference type="eggNOG" id="COG0211">
    <property type="taxonomic scope" value="Bacteria"/>
</dbReference>
<dbReference type="HOGENOM" id="CLU_095424_4_1_5"/>
<dbReference type="Proteomes" id="UP000002301">
    <property type="component" value="Chromosome 1"/>
</dbReference>
<dbReference type="GO" id="GO:0022625">
    <property type="term" value="C:cytosolic large ribosomal subunit"/>
    <property type="evidence" value="ECO:0007669"/>
    <property type="project" value="TreeGrafter"/>
</dbReference>
<dbReference type="GO" id="GO:0003735">
    <property type="term" value="F:structural constituent of ribosome"/>
    <property type="evidence" value="ECO:0007669"/>
    <property type="project" value="InterPro"/>
</dbReference>
<dbReference type="GO" id="GO:0006412">
    <property type="term" value="P:translation"/>
    <property type="evidence" value="ECO:0007669"/>
    <property type="project" value="UniProtKB-UniRule"/>
</dbReference>
<dbReference type="FunFam" id="2.40.50.100:FF:000020">
    <property type="entry name" value="50S ribosomal protein L27"/>
    <property type="match status" value="1"/>
</dbReference>
<dbReference type="Gene3D" id="2.40.50.100">
    <property type="match status" value="1"/>
</dbReference>
<dbReference type="HAMAP" id="MF_00539">
    <property type="entry name" value="Ribosomal_bL27"/>
    <property type="match status" value="1"/>
</dbReference>
<dbReference type="InterPro" id="IPR001684">
    <property type="entry name" value="Ribosomal_bL27"/>
</dbReference>
<dbReference type="InterPro" id="IPR018261">
    <property type="entry name" value="Ribosomal_bL27_CS"/>
</dbReference>
<dbReference type="NCBIfam" id="TIGR00062">
    <property type="entry name" value="L27"/>
    <property type="match status" value="1"/>
</dbReference>
<dbReference type="PANTHER" id="PTHR15893:SF0">
    <property type="entry name" value="LARGE RIBOSOMAL SUBUNIT PROTEIN BL27M"/>
    <property type="match status" value="1"/>
</dbReference>
<dbReference type="PANTHER" id="PTHR15893">
    <property type="entry name" value="RIBOSOMAL PROTEIN L27"/>
    <property type="match status" value="1"/>
</dbReference>
<dbReference type="Pfam" id="PF01016">
    <property type="entry name" value="Ribosomal_L27"/>
    <property type="match status" value="1"/>
</dbReference>
<dbReference type="PRINTS" id="PR00063">
    <property type="entry name" value="RIBOSOMALL27"/>
</dbReference>
<dbReference type="SUPFAM" id="SSF110324">
    <property type="entry name" value="Ribosomal L27 protein-like"/>
    <property type="match status" value="1"/>
</dbReference>
<dbReference type="PROSITE" id="PS00831">
    <property type="entry name" value="RIBOSOMAL_L27"/>
    <property type="match status" value="1"/>
</dbReference>
<name>RL27_BRUA4</name>
<organism>
    <name type="scientific">Brucella anthropi (strain ATCC 49188 / DSM 6882 / CCUG 24695 / JCM 21032 / LMG 3331 / NBRC 15819 / NCTC 12168 / Alc 37)</name>
    <name type="common">Ochrobactrum anthropi</name>
    <dbReference type="NCBI Taxonomy" id="439375"/>
    <lineage>
        <taxon>Bacteria</taxon>
        <taxon>Pseudomonadati</taxon>
        <taxon>Pseudomonadota</taxon>
        <taxon>Alphaproteobacteria</taxon>
        <taxon>Hyphomicrobiales</taxon>
        <taxon>Brucellaceae</taxon>
        <taxon>Brucella/Ochrobactrum group</taxon>
        <taxon>Brucella</taxon>
    </lineage>
</organism>
<gene>
    <name evidence="1" type="primary">rpmA</name>
    <name type="ordered locus">Oant_1051</name>
</gene>
<proteinExistence type="inferred from homology"/>
<accession>A6WXR7</accession>
<protein>
    <recommendedName>
        <fullName evidence="1">Large ribosomal subunit protein bL27</fullName>
    </recommendedName>
    <alternativeName>
        <fullName evidence="3">50S ribosomal protein L27</fullName>
    </alternativeName>
</protein>
<sequence>MAHKKAGGSSRNGRDSESKRLGVKKFGGEAVLAGNIIVRQRGTKWHPGANVGLGKDHTIFATTNGSVSFRTKANGRTYVSVDPIAEAAE</sequence>